<keyword id="KW-0963">Cytoplasm</keyword>
<keyword id="KW-0456">Lyase</keyword>
<keyword id="KW-0460">Magnesium</keyword>
<keyword id="KW-0464">Manganese</keyword>
<keyword id="KW-0479">Metal-binding</keyword>
<keyword id="KW-1185">Reference proteome</keyword>
<evidence type="ECO:0000250" key="1"/>
<evidence type="ECO:0000269" key="2">
    <source>
    </source>
</evidence>
<evidence type="ECO:0000305" key="3"/>
<sequence length="601" mass="70179">MEATRTSFGLHNAPLCPTTNPSLFPRRWLHKHTLSLKPAKQHHLVCVRATESNDNLESSRPLAHFSPTLWGDHFLSVPLHVAEFDDFSREIEVTMKPKVRDMLKSSKNSDNERIRLIHLLMNLGIAYHFEIEIDEILGQAFGNLDDIIAKENDLETISTMFEVFRLRGYYMPCYAFNRFKGEDGRFKESLAEDIRGMLQLYEAAHLGTPSEDIMDEALSFTRYRLESLTSNHTATASPHLSKHIQNALYRARYHNLEILVAREYISFYEQEEDHDETLLKFAKLNFNYCQLHYIQELKDLTKWWKELDLASKLPYIRDRIVEVYFGALALYFEPRYSLGRIIVTKITMIVTVFNDTCDAYGTLPEVTSLVDSFQRWDLGDIEKLPSYVKIVFRGVFETLEEIEQEMRPQGRSRIVQVAVDEIKKLGKAYLAISKWARASHVPTFEEYMEFGMQTSMDHFAAYSFIAMEDCDENQTCEWYKSRPKMMEALNGVFRIKNDINTFEQEMSRGEVAKGLNCYMKQHGVSKEEAIGEMNKIYSNYYKIIMEEYLTTTAVPRPILVRCLNVSRPIHHFYKERDEFTDPYFGMLKEVITSLFIHPIPL</sequence>
<dbReference type="EC" id="4.2.3.-"/>
<dbReference type="EMBL" id="AB028617">
    <property type="protein sequence ID" value="BAB01341.1"/>
    <property type="status" value="ALT_SEQ"/>
    <property type="molecule type" value="Genomic_DNA"/>
</dbReference>
<dbReference type="EMBL" id="CP002686">
    <property type="protein sequence ID" value="AEE75532.1"/>
    <property type="molecule type" value="Genomic_DNA"/>
</dbReference>
<dbReference type="RefSeq" id="NP_188067.1">
    <property type="nucleotide sequence ID" value="NM_112309.2"/>
</dbReference>
<dbReference type="SMR" id="Q9LRR2"/>
<dbReference type="FunCoup" id="Q9LRR2">
    <property type="interactions" value="22"/>
</dbReference>
<dbReference type="STRING" id="3702.Q9LRR2"/>
<dbReference type="PaxDb" id="3702-AT3G14490.1"/>
<dbReference type="EnsemblPlants" id="AT3G14490.1">
    <property type="protein sequence ID" value="AT3G14490.1"/>
    <property type="gene ID" value="AT3G14490"/>
</dbReference>
<dbReference type="GeneID" id="820672"/>
<dbReference type="Gramene" id="AT3G14490.1">
    <property type="protein sequence ID" value="AT3G14490.1"/>
    <property type="gene ID" value="AT3G14490"/>
</dbReference>
<dbReference type="KEGG" id="ath:AT3G14490"/>
<dbReference type="Araport" id="AT3G14490"/>
<dbReference type="TAIR" id="AT3G14490"/>
<dbReference type="eggNOG" id="ENOG502QUCN">
    <property type="taxonomic scope" value="Eukaryota"/>
</dbReference>
<dbReference type="HOGENOM" id="CLU_003125_7_2_1"/>
<dbReference type="InParanoid" id="Q9LRR2"/>
<dbReference type="OMA" id="RLRGYYM"/>
<dbReference type="PhylomeDB" id="Q9LRR2"/>
<dbReference type="BioCyc" id="ARA:AT3G14490-MONOMER"/>
<dbReference type="UniPathway" id="UPA00213"/>
<dbReference type="PRO" id="PR:Q9LRR2"/>
<dbReference type="Proteomes" id="UP000006548">
    <property type="component" value="Chromosome 3"/>
</dbReference>
<dbReference type="ExpressionAtlas" id="Q9LRR2">
    <property type="expression patterns" value="baseline and differential"/>
</dbReference>
<dbReference type="GO" id="GO:0005737">
    <property type="term" value="C:cytoplasm"/>
    <property type="evidence" value="ECO:0007669"/>
    <property type="project" value="UniProtKB-SubCell"/>
</dbReference>
<dbReference type="GO" id="GO:0000287">
    <property type="term" value="F:magnesium ion binding"/>
    <property type="evidence" value="ECO:0007669"/>
    <property type="project" value="InterPro"/>
</dbReference>
<dbReference type="GO" id="GO:0010333">
    <property type="term" value="F:terpene synthase activity"/>
    <property type="evidence" value="ECO:0007669"/>
    <property type="project" value="InterPro"/>
</dbReference>
<dbReference type="GO" id="GO:0016102">
    <property type="term" value="P:diterpenoid biosynthetic process"/>
    <property type="evidence" value="ECO:0007669"/>
    <property type="project" value="InterPro"/>
</dbReference>
<dbReference type="CDD" id="cd00684">
    <property type="entry name" value="Terpene_cyclase_plant_C1"/>
    <property type="match status" value="1"/>
</dbReference>
<dbReference type="FunFam" id="1.10.600.10:FF:000007">
    <property type="entry name" value="Isoprene synthase, chloroplastic"/>
    <property type="match status" value="1"/>
</dbReference>
<dbReference type="FunFam" id="1.50.10.130:FF:000001">
    <property type="entry name" value="Isoprene synthase, chloroplastic"/>
    <property type="match status" value="1"/>
</dbReference>
<dbReference type="Gene3D" id="1.10.600.10">
    <property type="entry name" value="Farnesyl Diphosphate Synthase"/>
    <property type="match status" value="1"/>
</dbReference>
<dbReference type="Gene3D" id="1.50.10.130">
    <property type="entry name" value="Terpene synthase, N-terminal domain"/>
    <property type="match status" value="1"/>
</dbReference>
<dbReference type="InterPro" id="IPR008949">
    <property type="entry name" value="Isoprenoid_synthase_dom_sf"/>
</dbReference>
<dbReference type="InterPro" id="IPR034741">
    <property type="entry name" value="Terpene_cyclase-like_1_C"/>
</dbReference>
<dbReference type="InterPro" id="IPR044814">
    <property type="entry name" value="Terpene_cyclase_plant_C1"/>
</dbReference>
<dbReference type="InterPro" id="IPR001906">
    <property type="entry name" value="Terpene_synth_N"/>
</dbReference>
<dbReference type="InterPro" id="IPR036965">
    <property type="entry name" value="Terpene_synth_N_sf"/>
</dbReference>
<dbReference type="InterPro" id="IPR050148">
    <property type="entry name" value="Terpene_synthase-like"/>
</dbReference>
<dbReference type="InterPro" id="IPR005630">
    <property type="entry name" value="Terpene_synthase_metal-bd"/>
</dbReference>
<dbReference type="InterPro" id="IPR008930">
    <property type="entry name" value="Terpenoid_cyclase/PrenylTrfase"/>
</dbReference>
<dbReference type="PANTHER" id="PTHR31225:SF93">
    <property type="entry name" value="ALPHA-HUMULENE_(-)-(E)-BETA-CARYOPHYLLENE SYNTHASE"/>
    <property type="match status" value="1"/>
</dbReference>
<dbReference type="PANTHER" id="PTHR31225">
    <property type="entry name" value="OS04G0344100 PROTEIN-RELATED"/>
    <property type="match status" value="1"/>
</dbReference>
<dbReference type="Pfam" id="PF01397">
    <property type="entry name" value="Terpene_synth"/>
    <property type="match status" value="1"/>
</dbReference>
<dbReference type="Pfam" id="PF03936">
    <property type="entry name" value="Terpene_synth_C"/>
    <property type="match status" value="1"/>
</dbReference>
<dbReference type="SFLD" id="SFLDS00005">
    <property type="entry name" value="Isoprenoid_Synthase_Type_I"/>
    <property type="match status" value="1"/>
</dbReference>
<dbReference type="SFLD" id="SFLDG01019">
    <property type="entry name" value="Terpene_Cyclase_Like_1_C_Termi"/>
    <property type="match status" value="1"/>
</dbReference>
<dbReference type="SUPFAM" id="SSF48239">
    <property type="entry name" value="Terpenoid cyclases/Protein prenyltransferases"/>
    <property type="match status" value="1"/>
</dbReference>
<dbReference type="SUPFAM" id="SSF48576">
    <property type="entry name" value="Terpenoid synthases"/>
    <property type="match status" value="1"/>
</dbReference>
<comment type="cofactor">
    <cofactor evidence="1">
        <name>Mg(2+)</name>
        <dbReference type="ChEBI" id="CHEBI:18420"/>
    </cofactor>
    <cofactor evidence="1">
        <name>Mn(2+)</name>
        <dbReference type="ChEBI" id="CHEBI:29035"/>
    </cofactor>
    <text evidence="1">Binds 3 Mg(2+) or Mn(2+) ions per subunit.</text>
</comment>
<comment type="pathway">
    <text>Secondary metabolite biosynthesis; terpenoid biosynthesis.</text>
</comment>
<comment type="subcellular location">
    <subcellularLocation>
        <location evidence="3">Cytoplasm</location>
    </subcellularLocation>
</comment>
<comment type="tissue specificity">
    <text evidence="2">Expressed exclusively in flowers.</text>
</comment>
<comment type="domain">
    <text>The Asp-Asp-Xaa-Xaa-Asp/Glu (DDXXD/E) motif is important for the catalytic activity, presumably through binding to Mg(2+).</text>
</comment>
<comment type="similarity">
    <text evidence="3">Belongs to the terpene synthase family. Tpsa subfamily.</text>
</comment>
<comment type="sequence caution" evidence="3">
    <conflict type="erroneous gene model prediction">
        <sequence resource="EMBL-CDS" id="BAB01341"/>
    </conflict>
</comment>
<feature type="chain" id="PRO_0000403708" description="Terpenoid synthase 17">
    <location>
        <begin position="1"/>
        <end position="601"/>
    </location>
</feature>
<feature type="short sequence motif" description="DDXXD motif; degenerate">
    <location>
        <begin position="354"/>
        <end position="358"/>
    </location>
</feature>
<feature type="binding site" evidence="1">
    <location>
        <position position="354"/>
    </location>
    <ligand>
        <name>Mg(2+)</name>
        <dbReference type="ChEBI" id="CHEBI:18420"/>
        <label>1</label>
    </ligand>
</feature>
<feature type="binding site" evidence="1">
    <location>
        <position position="354"/>
    </location>
    <ligand>
        <name>Mg(2+)</name>
        <dbReference type="ChEBI" id="CHEBI:18420"/>
        <label>2</label>
    </ligand>
</feature>
<feature type="binding site" evidence="1">
    <location>
        <position position="358"/>
    </location>
    <ligand>
        <name>Mg(2+)</name>
        <dbReference type="ChEBI" id="CHEBI:18420"/>
        <label>1</label>
    </ligand>
</feature>
<feature type="binding site" evidence="1">
    <location>
        <position position="358"/>
    </location>
    <ligand>
        <name>Mg(2+)</name>
        <dbReference type="ChEBI" id="CHEBI:18420"/>
        <label>2</label>
    </ligand>
</feature>
<feature type="binding site" evidence="1">
    <location>
        <position position="497"/>
    </location>
    <ligand>
        <name>Mg(2+)</name>
        <dbReference type="ChEBI" id="CHEBI:18420"/>
        <label>3</label>
    </ligand>
</feature>
<feature type="binding site" evidence="1">
    <location>
        <position position="501"/>
    </location>
    <ligand>
        <name>Mg(2+)</name>
        <dbReference type="ChEBI" id="CHEBI:18420"/>
        <label>3</label>
    </ligand>
</feature>
<feature type="binding site" evidence="1">
    <location>
        <position position="505"/>
    </location>
    <ligand>
        <name>Mg(2+)</name>
        <dbReference type="ChEBI" id="CHEBI:18420"/>
        <label>3</label>
    </ligand>
</feature>
<organism>
    <name type="scientific">Arabidopsis thaliana</name>
    <name type="common">Mouse-ear cress</name>
    <dbReference type="NCBI Taxonomy" id="3702"/>
    <lineage>
        <taxon>Eukaryota</taxon>
        <taxon>Viridiplantae</taxon>
        <taxon>Streptophyta</taxon>
        <taxon>Embryophyta</taxon>
        <taxon>Tracheophyta</taxon>
        <taxon>Spermatophyta</taxon>
        <taxon>Magnoliopsida</taxon>
        <taxon>eudicotyledons</taxon>
        <taxon>Gunneridae</taxon>
        <taxon>Pentapetalae</taxon>
        <taxon>rosids</taxon>
        <taxon>malvids</taxon>
        <taxon>Brassicales</taxon>
        <taxon>Brassicaceae</taxon>
        <taxon>Camelineae</taxon>
        <taxon>Arabidopsis</taxon>
    </lineage>
</organism>
<gene>
    <name type="primary">TPS17</name>
    <name type="ordered locus">At3g14490</name>
    <name type="ORF">MOA2.12</name>
</gene>
<proteinExistence type="evidence at transcript level"/>
<name>TPS17_ARATH</name>
<protein>
    <recommendedName>
        <fullName>Terpenoid synthase 17</fullName>
        <shortName>AtTPS17</shortName>
        <ecNumber>4.2.3.-</ecNumber>
    </recommendedName>
</protein>
<reference key="1">
    <citation type="journal article" date="2000" name="DNA Res.">
        <title>Structural analysis of Arabidopsis thaliana chromosome 3. I. Sequence features of the regions of 4,504,864 bp covered by sixty P1 and TAC clones.</title>
        <authorList>
            <person name="Sato S."/>
            <person name="Nakamura Y."/>
            <person name="Kaneko T."/>
            <person name="Katoh T."/>
            <person name="Asamizu E."/>
            <person name="Tabata S."/>
        </authorList>
    </citation>
    <scope>NUCLEOTIDE SEQUENCE [LARGE SCALE GENOMIC DNA]</scope>
    <source>
        <strain>cv. Columbia</strain>
    </source>
</reference>
<reference key="2">
    <citation type="journal article" date="2017" name="Plant J.">
        <title>Araport11: a complete reannotation of the Arabidopsis thaliana reference genome.</title>
        <authorList>
            <person name="Cheng C.Y."/>
            <person name="Krishnakumar V."/>
            <person name="Chan A.P."/>
            <person name="Thibaud-Nissen F."/>
            <person name="Schobel S."/>
            <person name="Town C.D."/>
        </authorList>
    </citation>
    <scope>GENOME REANNOTATION</scope>
    <source>
        <strain>cv. Columbia</strain>
    </source>
</reference>
<reference key="3">
    <citation type="journal article" date="2002" name="Mol. Genet. Genomics">
        <title>Genomic analysis of the terpenoid synthase (AtTPS) gene family of Arabidopsis thaliana.</title>
        <authorList>
            <person name="Aubourg S."/>
            <person name="Lecharny A."/>
            <person name="Bohlmann J."/>
        </authorList>
    </citation>
    <scope>GENE FAMILY</scope>
    <scope>NOMENCLATURE</scope>
</reference>
<reference key="4">
    <citation type="journal article" date="2003" name="Plant Cell">
        <title>Biosynthesis and emission of terpenoid volatiles from Arabidopsis flowers.</title>
        <authorList>
            <person name="Chen F."/>
            <person name="Tholl D."/>
            <person name="D'Auria J.C."/>
            <person name="Farooq A."/>
            <person name="Pichersky E."/>
            <person name="Gershenzon J."/>
        </authorList>
    </citation>
    <scope>TISSUE SPECIFICITY</scope>
</reference>
<reference key="5">
    <citation type="journal article" date="2003" name="Plant Mol. Biol.">
        <title>Genome organization in Arabidopsis thaliana: a survey for genes involved in isoprenoid and chlorophyll metabolism.</title>
        <authorList>
            <person name="Lange B.M."/>
            <person name="Ghassemian M."/>
        </authorList>
    </citation>
    <scope>GENE FAMILY</scope>
</reference>
<accession>Q9LRR2</accession>